<evidence type="ECO:0000255" key="1">
    <source>
        <dbReference type="HAMAP-Rule" id="MF_00167"/>
    </source>
</evidence>
<name>CSRA_NAUPA</name>
<gene>
    <name evidence="1" type="primary">csrA</name>
    <name type="ordered locus">NAMH_0494</name>
</gene>
<reference key="1">
    <citation type="journal article" date="2009" name="PLoS Genet.">
        <title>Adaptations to submarine hydrothermal environments exemplified by the genome of Nautilia profundicola.</title>
        <authorList>
            <person name="Campbell B.J."/>
            <person name="Smith J.L."/>
            <person name="Hanson T.E."/>
            <person name="Klotz M.G."/>
            <person name="Stein L.Y."/>
            <person name="Lee C.K."/>
            <person name="Wu D."/>
            <person name="Robinson J.M."/>
            <person name="Khouri H.M."/>
            <person name="Eisen J.A."/>
            <person name="Cary S.C."/>
        </authorList>
    </citation>
    <scope>NUCLEOTIDE SEQUENCE [LARGE SCALE GENOMIC DNA]</scope>
    <source>
        <strain>ATCC BAA-1463 / DSM 18972 / AmH</strain>
    </source>
</reference>
<dbReference type="EMBL" id="CP001279">
    <property type="protein sequence ID" value="ACM92084.1"/>
    <property type="molecule type" value="Genomic_DNA"/>
</dbReference>
<dbReference type="RefSeq" id="WP_012663456.1">
    <property type="nucleotide sequence ID" value="NC_012115.1"/>
</dbReference>
<dbReference type="SMR" id="B9L8F4"/>
<dbReference type="STRING" id="598659.NAMH_0494"/>
<dbReference type="KEGG" id="nam:NAMH_0494"/>
<dbReference type="eggNOG" id="COG1551">
    <property type="taxonomic scope" value="Bacteria"/>
</dbReference>
<dbReference type="HOGENOM" id="CLU_164837_0_0_7"/>
<dbReference type="OrthoDB" id="9809061at2"/>
<dbReference type="Proteomes" id="UP000000448">
    <property type="component" value="Chromosome"/>
</dbReference>
<dbReference type="GO" id="GO:0005829">
    <property type="term" value="C:cytosol"/>
    <property type="evidence" value="ECO:0007669"/>
    <property type="project" value="TreeGrafter"/>
</dbReference>
<dbReference type="GO" id="GO:0048027">
    <property type="term" value="F:mRNA 5'-UTR binding"/>
    <property type="evidence" value="ECO:0007669"/>
    <property type="project" value="UniProtKB-UniRule"/>
</dbReference>
<dbReference type="GO" id="GO:0044781">
    <property type="term" value="P:bacterial-type flagellum organization"/>
    <property type="evidence" value="ECO:0007669"/>
    <property type="project" value="UniProtKB-KW"/>
</dbReference>
<dbReference type="GO" id="GO:0006402">
    <property type="term" value="P:mRNA catabolic process"/>
    <property type="evidence" value="ECO:0007669"/>
    <property type="project" value="InterPro"/>
</dbReference>
<dbReference type="GO" id="GO:0045947">
    <property type="term" value="P:negative regulation of translational initiation"/>
    <property type="evidence" value="ECO:0007669"/>
    <property type="project" value="UniProtKB-UniRule"/>
</dbReference>
<dbReference type="GO" id="GO:1902208">
    <property type="term" value="P:regulation of bacterial-type flagellum assembly"/>
    <property type="evidence" value="ECO:0007669"/>
    <property type="project" value="UniProtKB-UniRule"/>
</dbReference>
<dbReference type="GO" id="GO:0006109">
    <property type="term" value="P:regulation of carbohydrate metabolic process"/>
    <property type="evidence" value="ECO:0007669"/>
    <property type="project" value="InterPro"/>
</dbReference>
<dbReference type="FunFam" id="2.60.40.4380:FF:000002">
    <property type="entry name" value="Translational regulator CsrA"/>
    <property type="match status" value="1"/>
</dbReference>
<dbReference type="Gene3D" id="2.60.40.4380">
    <property type="entry name" value="Translational regulator CsrA"/>
    <property type="match status" value="1"/>
</dbReference>
<dbReference type="HAMAP" id="MF_00167">
    <property type="entry name" value="CsrA"/>
    <property type="match status" value="1"/>
</dbReference>
<dbReference type="InterPro" id="IPR003751">
    <property type="entry name" value="CsrA"/>
</dbReference>
<dbReference type="InterPro" id="IPR036107">
    <property type="entry name" value="CsrA_sf"/>
</dbReference>
<dbReference type="NCBIfam" id="TIGR00202">
    <property type="entry name" value="csrA"/>
    <property type="match status" value="1"/>
</dbReference>
<dbReference type="NCBIfam" id="NF002469">
    <property type="entry name" value="PRK01712.1"/>
    <property type="match status" value="1"/>
</dbReference>
<dbReference type="PANTHER" id="PTHR34984">
    <property type="entry name" value="CARBON STORAGE REGULATOR"/>
    <property type="match status" value="1"/>
</dbReference>
<dbReference type="PANTHER" id="PTHR34984:SF1">
    <property type="entry name" value="CARBON STORAGE REGULATOR"/>
    <property type="match status" value="1"/>
</dbReference>
<dbReference type="Pfam" id="PF02599">
    <property type="entry name" value="CsrA"/>
    <property type="match status" value="1"/>
</dbReference>
<dbReference type="SUPFAM" id="SSF117130">
    <property type="entry name" value="CsrA-like"/>
    <property type="match status" value="1"/>
</dbReference>
<protein>
    <recommendedName>
        <fullName evidence="1">Translational regulator CsrA</fullName>
    </recommendedName>
</protein>
<organism>
    <name type="scientific">Nautilia profundicola (strain ATCC BAA-1463 / DSM 18972 / AmH)</name>
    <dbReference type="NCBI Taxonomy" id="598659"/>
    <lineage>
        <taxon>Bacteria</taxon>
        <taxon>Pseudomonadati</taxon>
        <taxon>Campylobacterota</taxon>
        <taxon>Epsilonproteobacteria</taxon>
        <taxon>Nautiliales</taxon>
        <taxon>Nautiliaceae</taxon>
        <taxon>Nautilia</taxon>
    </lineage>
</organism>
<accession>B9L8F4</accession>
<comment type="function">
    <text evidence="1">A translational regulator that binds mRNA to regulate translation initiation and/or mRNA stability. Usually binds in the 5'-UTR at or near the Shine-Dalgarno sequence preventing ribosome-binding, thus repressing translation. Its main target seems to be the major flagellin gene, while its function is anatagonized by FliW.</text>
</comment>
<comment type="subunit">
    <text evidence="1">Homodimer; the beta-strands of each monomer intercalate to form a hydrophobic core, while the alpha-helices form wings that extend away from the core.</text>
</comment>
<comment type="subcellular location">
    <subcellularLocation>
        <location evidence="1">Cytoplasm</location>
    </subcellularLocation>
</comment>
<comment type="similarity">
    <text evidence="1">Belongs to the CsrA/RsmA family.</text>
</comment>
<feature type="chain" id="PRO_1000123630" description="Translational regulator CsrA">
    <location>
        <begin position="1"/>
        <end position="77"/>
    </location>
</feature>
<keyword id="KW-1005">Bacterial flagellum biogenesis</keyword>
<keyword id="KW-0963">Cytoplasm</keyword>
<keyword id="KW-0678">Repressor</keyword>
<keyword id="KW-0694">RNA-binding</keyword>
<keyword id="KW-0810">Translation regulation</keyword>
<sequence>MLVISRKINEKIKIGDDIEITIVSVDKNQVKIGIDAPKNIPILRSELIEQITQENKKAAKEVDITVLKNISDIFKGN</sequence>
<proteinExistence type="inferred from homology"/>